<gene>
    <name evidence="1" type="primary">nfuA</name>
    <name type="ordered locus">IL0248</name>
</gene>
<organism>
    <name type="scientific">Idiomarina loihiensis (strain ATCC BAA-735 / DSM 15497 / L2-TR)</name>
    <dbReference type="NCBI Taxonomy" id="283942"/>
    <lineage>
        <taxon>Bacteria</taxon>
        <taxon>Pseudomonadati</taxon>
        <taxon>Pseudomonadota</taxon>
        <taxon>Gammaproteobacteria</taxon>
        <taxon>Alteromonadales</taxon>
        <taxon>Idiomarinaceae</taxon>
        <taxon>Idiomarina</taxon>
    </lineage>
</organism>
<keyword id="KW-0004">4Fe-4S</keyword>
<keyword id="KW-0408">Iron</keyword>
<keyword id="KW-0411">Iron-sulfur</keyword>
<keyword id="KW-0479">Metal-binding</keyword>
<keyword id="KW-1185">Reference proteome</keyword>
<evidence type="ECO:0000255" key="1">
    <source>
        <dbReference type="HAMAP-Rule" id="MF_01637"/>
    </source>
</evidence>
<sequence>MIRISEAAQSHFKKLLADQPDGTCIRVFVVNPGMANAECGVSYCPPDSVEPDDERLPFNGFDAVVDSGSAPFLEDAAIDFEEQEMGSQLTLKAPNAKARKVADDAPLIERVEYVIQAEINPQLASHGGQVMISEITDDGVAILQFGGGCNGCSMIDVTLKNGIEKELLERFPEEVKGVRDITDHEPGEHSYY</sequence>
<comment type="function">
    <text evidence="1">Involved in iron-sulfur cluster biogenesis. Binds a 4Fe-4S cluster, can transfer this cluster to apoproteins, and thereby intervenes in the maturation of Fe/S proteins. Could also act as a scaffold/chaperone for damaged Fe/S proteins.</text>
</comment>
<comment type="cofactor">
    <cofactor evidence="1">
        <name>[4Fe-4S] cluster</name>
        <dbReference type="ChEBI" id="CHEBI:49883"/>
    </cofactor>
    <text evidence="1">Binds 1 [4Fe-4S] cluster per subunit. The cluster is presumably bound at the interface of two monomers.</text>
</comment>
<comment type="subunit">
    <text evidence="1">Homodimer.</text>
</comment>
<comment type="similarity">
    <text evidence="1">Belongs to the NfuA family.</text>
</comment>
<protein>
    <recommendedName>
        <fullName evidence="1">Fe/S biogenesis protein NfuA</fullName>
    </recommendedName>
</protein>
<proteinExistence type="inferred from homology"/>
<accession>Q5QZC8</accession>
<reference key="1">
    <citation type="journal article" date="2004" name="Proc. Natl. Acad. Sci. U.S.A.">
        <title>Genome sequence of the deep-sea gamma-proteobacterium Idiomarina loihiensis reveals amino acid fermentation as a source of carbon and energy.</title>
        <authorList>
            <person name="Hou S."/>
            <person name="Saw J.H."/>
            <person name="Lee K.S."/>
            <person name="Freitas T.A."/>
            <person name="Belisle C."/>
            <person name="Kawarabayasi Y."/>
            <person name="Donachie S.P."/>
            <person name="Pikina A."/>
            <person name="Galperin M.Y."/>
            <person name="Koonin E.V."/>
            <person name="Makarova K.S."/>
            <person name="Omelchenko M.V."/>
            <person name="Sorokin A."/>
            <person name="Wolf Y.I."/>
            <person name="Li Q.X."/>
            <person name="Keum Y.S."/>
            <person name="Campbell S."/>
            <person name="Denery J."/>
            <person name="Aizawa S."/>
            <person name="Shibata S."/>
            <person name="Malahoff A."/>
            <person name="Alam M."/>
        </authorList>
    </citation>
    <scope>NUCLEOTIDE SEQUENCE [LARGE SCALE GENOMIC DNA]</scope>
    <source>
        <strain>ATCC BAA-735 / DSM 15497 / L2-TR</strain>
    </source>
</reference>
<name>NFUA_IDILO</name>
<dbReference type="EMBL" id="AE017340">
    <property type="protein sequence ID" value="AAV81091.1"/>
    <property type="molecule type" value="Genomic_DNA"/>
</dbReference>
<dbReference type="RefSeq" id="WP_011233510.1">
    <property type="nucleotide sequence ID" value="NC_006512.1"/>
</dbReference>
<dbReference type="SMR" id="Q5QZC8"/>
<dbReference type="STRING" id="283942.IL0248"/>
<dbReference type="GeneID" id="41335394"/>
<dbReference type="KEGG" id="ilo:IL0248"/>
<dbReference type="eggNOG" id="COG0316">
    <property type="taxonomic scope" value="Bacteria"/>
</dbReference>
<dbReference type="eggNOG" id="COG0694">
    <property type="taxonomic scope" value="Bacteria"/>
</dbReference>
<dbReference type="HOGENOM" id="CLU_094569_0_0_6"/>
<dbReference type="OrthoDB" id="9785450at2"/>
<dbReference type="Proteomes" id="UP000001171">
    <property type="component" value="Chromosome"/>
</dbReference>
<dbReference type="GO" id="GO:0051539">
    <property type="term" value="F:4 iron, 4 sulfur cluster binding"/>
    <property type="evidence" value="ECO:0007669"/>
    <property type="project" value="UniProtKB-UniRule"/>
</dbReference>
<dbReference type="GO" id="GO:0005506">
    <property type="term" value="F:iron ion binding"/>
    <property type="evidence" value="ECO:0007669"/>
    <property type="project" value="InterPro"/>
</dbReference>
<dbReference type="GO" id="GO:0016226">
    <property type="term" value="P:iron-sulfur cluster assembly"/>
    <property type="evidence" value="ECO:0007669"/>
    <property type="project" value="UniProtKB-UniRule"/>
</dbReference>
<dbReference type="GO" id="GO:0051604">
    <property type="term" value="P:protein maturation"/>
    <property type="evidence" value="ECO:0007669"/>
    <property type="project" value="UniProtKB-UniRule"/>
</dbReference>
<dbReference type="Gene3D" id="3.30.300.130">
    <property type="entry name" value="Fe-S cluster assembly (FSCA)"/>
    <property type="match status" value="1"/>
</dbReference>
<dbReference type="Gene3D" id="2.60.300.12">
    <property type="entry name" value="HesB-like domain"/>
    <property type="match status" value="1"/>
</dbReference>
<dbReference type="HAMAP" id="MF_01637">
    <property type="entry name" value="Fe_S_biogen_NfuA"/>
    <property type="match status" value="1"/>
</dbReference>
<dbReference type="InterPro" id="IPR017726">
    <property type="entry name" value="Fe/S_biogenesis_protein_NfuA"/>
</dbReference>
<dbReference type="InterPro" id="IPR000361">
    <property type="entry name" value="FeS_biogenesis"/>
</dbReference>
<dbReference type="InterPro" id="IPR034904">
    <property type="entry name" value="FSCA_dom_sf"/>
</dbReference>
<dbReference type="InterPro" id="IPR035903">
    <property type="entry name" value="HesB-like_dom_sf"/>
</dbReference>
<dbReference type="InterPro" id="IPR001075">
    <property type="entry name" value="NIF_FeS_clus_asmbl_NifU_C"/>
</dbReference>
<dbReference type="NCBIfam" id="NF008392">
    <property type="entry name" value="PRK11190.1"/>
    <property type="match status" value="1"/>
</dbReference>
<dbReference type="NCBIfam" id="TIGR03341">
    <property type="entry name" value="YhgI_GntY"/>
    <property type="match status" value="1"/>
</dbReference>
<dbReference type="PANTHER" id="PTHR11178:SF51">
    <property type="entry name" value="FE_S BIOGENESIS PROTEIN NFUA"/>
    <property type="match status" value="1"/>
</dbReference>
<dbReference type="PANTHER" id="PTHR11178">
    <property type="entry name" value="IRON-SULFUR CLUSTER SCAFFOLD PROTEIN NFU-RELATED"/>
    <property type="match status" value="1"/>
</dbReference>
<dbReference type="Pfam" id="PF01521">
    <property type="entry name" value="Fe-S_biosyn"/>
    <property type="match status" value="1"/>
</dbReference>
<dbReference type="Pfam" id="PF01106">
    <property type="entry name" value="NifU"/>
    <property type="match status" value="1"/>
</dbReference>
<dbReference type="SUPFAM" id="SSF117916">
    <property type="entry name" value="Fe-S cluster assembly (FSCA) domain-like"/>
    <property type="match status" value="1"/>
</dbReference>
<dbReference type="SUPFAM" id="SSF89360">
    <property type="entry name" value="HesB-like domain"/>
    <property type="match status" value="1"/>
</dbReference>
<feature type="chain" id="PRO_0000268233" description="Fe/S biogenesis protein NfuA">
    <location>
        <begin position="1"/>
        <end position="192"/>
    </location>
</feature>
<feature type="binding site" evidence="1">
    <location>
        <position position="149"/>
    </location>
    <ligand>
        <name>[4Fe-4S] cluster</name>
        <dbReference type="ChEBI" id="CHEBI:49883"/>
    </ligand>
</feature>
<feature type="binding site" evidence="1">
    <location>
        <position position="152"/>
    </location>
    <ligand>
        <name>[4Fe-4S] cluster</name>
        <dbReference type="ChEBI" id="CHEBI:49883"/>
    </ligand>
</feature>